<dbReference type="EC" id="1.14.17.4"/>
<dbReference type="EMBL" id="AC078898">
    <property type="protein sequence ID" value="AAG29196.1"/>
    <property type="status" value="ALT_SEQ"/>
    <property type="molecule type" value="Genomic_DNA"/>
</dbReference>
<dbReference type="EMBL" id="CP002684">
    <property type="protein sequence ID" value="AEE35965.1"/>
    <property type="molecule type" value="Genomic_DNA"/>
</dbReference>
<dbReference type="EMBL" id="BT026444">
    <property type="protein sequence ID" value="ABH04551.1"/>
    <property type="molecule type" value="mRNA"/>
</dbReference>
<dbReference type="EMBL" id="AK228946">
    <property type="protein sequence ID" value="BAF00835.1"/>
    <property type="molecule type" value="mRNA"/>
</dbReference>
<dbReference type="EMBL" id="AY086710">
    <property type="protein sequence ID" value="AAM63764.1"/>
    <property type="molecule type" value="mRNA"/>
</dbReference>
<dbReference type="PIR" id="C96802">
    <property type="entry name" value="C96802"/>
</dbReference>
<dbReference type="RefSeq" id="NP_565154.1">
    <property type="nucleotide sequence ID" value="NM_106382.3"/>
</dbReference>
<dbReference type="SMR" id="Q0WPW4"/>
<dbReference type="FunCoup" id="Q0WPW4">
    <property type="interactions" value="358"/>
</dbReference>
<dbReference type="STRING" id="3702.Q0WPW4"/>
<dbReference type="PaxDb" id="3702-AT1G77330.1"/>
<dbReference type="ProteomicsDB" id="244367"/>
<dbReference type="EnsemblPlants" id="AT1G77330.1">
    <property type="protein sequence ID" value="AT1G77330.1"/>
    <property type="gene ID" value="AT1G77330"/>
</dbReference>
<dbReference type="GeneID" id="844069"/>
<dbReference type="Gramene" id="AT1G77330.1">
    <property type="protein sequence ID" value="AT1G77330.1"/>
    <property type="gene ID" value="AT1G77330"/>
</dbReference>
<dbReference type="KEGG" id="ath:AT1G77330"/>
<dbReference type="Araport" id="AT1G77330"/>
<dbReference type="TAIR" id="AT1G77330">
    <property type="gene designation" value="ACO5"/>
</dbReference>
<dbReference type="eggNOG" id="KOG0143">
    <property type="taxonomic scope" value="Eukaryota"/>
</dbReference>
<dbReference type="HOGENOM" id="CLU_010119_16_1_1"/>
<dbReference type="InParanoid" id="Q0WPW4"/>
<dbReference type="OMA" id="SHYPPCQ"/>
<dbReference type="PhylomeDB" id="Q0WPW4"/>
<dbReference type="BioCyc" id="ARA:AT1G77330-MONOMER"/>
<dbReference type="UniPathway" id="UPA00384">
    <property type="reaction ID" value="UER00563"/>
</dbReference>
<dbReference type="PRO" id="PR:Q0WPW4"/>
<dbReference type="Proteomes" id="UP000006548">
    <property type="component" value="Chromosome 1"/>
</dbReference>
<dbReference type="ExpressionAtlas" id="Q0WPW4">
    <property type="expression patterns" value="baseline and differential"/>
</dbReference>
<dbReference type="GO" id="GO:0009815">
    <property type="term" value="F:1-aminocyclopropane-1-carboxylate oxidase activity"/>
    <property type="evidence" value="ECO:0000250"/>
    <property type="project" value="TAIR"/>
</dbReference>
<dbReference type="GO" id="GO:0031418">
    <property type="term" value="F:L-ascorbic acid binding"/>
    <property type="evidence" value="ECO:0007669"/>
    <property type="project" value="UniProtKB-KW"/>
</dbReference>
<dbReference type="GO" id="GO:0046872">
    <property type="term" value="F:metal ion binding"/>
    <property type="evidence" value="ECO:0007669"/>
    <property type="project" value="UniProtKB-KW"/>
</dbReference>
<dbReference type="GO" id="GO:0006952">
    <property type="term" value="P:defense response"/>
    <property type="evidence" value="ECO:0007669"/>
    <property type="project" value="UniProtKB-KW"/>
</dbReference>
<dbReference type="GO" id="GO:0009693">
    <property type="term" value="P:ethylene biosynthetic process"/>
    <property type="evidence" value="ECO:0000304"/>
    <property type="project" value="TAIR"/>
</dbReference>
<dbReference type="FunFam" id="2.60.120.330:FF:000010">
    <property type="entry name" value="1-aminocyclopropane-1-carboxylate oxidase 1"/>
    <property type="match status" value="1"/>
</dbReference>
<dbReference type="Gene3D" id="2.60.120.330">
    <property type="entry name" value="B-lactam Antibiotic, Isopenicillin N Synthase, Chain"/>
    <property type="match status" value="1"/>
</dbReference>
<dbReference type="InterPro" id="IPR026992">
    <property type="entry name" value="DIOX_N"/>
</dbReference>
<dbReference type="InterPro" id="IPR044861">
    <property type="entry name" value="IPNS-like_FE2OG_OXY"/>
</dbReference>
<dbReference type="InterPro" id="IPR027443">
    <property type="entry name" value="IPNS-like_sf"/>
</dbReference>
<dbReference type="InterPro" id="IPR005123">
    <property type="entry name" value="Oxoglu/Fe-dep_dioxygenase_dom"/>
</dbReference>
<dbReference type="InterPro" id="IPR050295">
    <property type="entry name" value="Plant_2OG-oxidoreductases"/>
</dbReference>
<dbReference type="PANTHER" id="PTHR47991">
    <property type="entry name" value="OXOGLUTARATE/IRON-DEPENDENT DIOXYGENASE"/>
    <property type="match status" value="1"/>
</dbReference>
<dbReference type="Pfam" id="PF03171">
    <property type="entry name" value="2OG-FeII_Oxy"/>
    <property type="match status" value="1"/>
</dbReference>
<dbReference type="Pfam" id="PF14226">
    <property type="entry name" value="DIOX_N"/>
    <property type="match status" value="1"/>
</dbReference>
<dbReference type="SUPFAM" id="SSF51197">
    <property type="entry name" value="Clavaminate synthase-like"/>
    <property type="match status" value="1"/>
</dbReference>
<dbReference type="PROSITE" id="PS51471">
    <property type="entry name" value="FE2OG_OXY"/>
    <property type="match status" value="1"/>
</dbReference>
<gene>
    <name type="ordered locus">At1g77330</name>
    <name type="ORF">F2P24.4</name>
</gene>
<comment type="function">
    <text evidence="1">Enzyme involved in the ethylene biosynthesis.</text>
</comment>
<comment type="catalytic activity">
    <reaction>
        <text>1-aminocyclopropane-1-carboxylate + L-ascorbate + O2 = ethene + L-dehydroascorbate + hydrogen cyanide + CO2 + 2 H2O</text>
        <dbReference type="Rhea" id="RHEA:23640"/>
        <dbReference type="ChEBI" id="CHEBI:15377"/>
        <dbReference type="ChEBI" id="CHEBI:15379"/>
        <dbReference type="ChEBI" id="CHEBI:16526"/>
        <dbReference type="ChEBI" id="CHEBI:18153"/>
        <dbReference type="ChEBI" id="CHEBI:18407"/>
        <dbReference type="ChEBI" id="CHEBI:38290"/>
        <dbReference type="ChEBI" id="CHEBI:58360"/>
        <dbReference type="ChEBI" id="CHEBI:58539"/>
        <dbReference type="EC" id="1.14.17.4"/>
    </reaction>
</comment>
<comment type="cofactor">
    <cofactor evidence="3">
        <name>Fe(2+)</name>
        <dbReference type="ChEBI" id="CHEBI:29033"/>
    </cofactor>
    <text evidence="3">Binds 1 Fe(2+) ion per subunit.</text>
</comment>
<comment type="pathway">
    <text>Alkene biosynthesis; ethylene biosynthesis via S-adenosyl-L-methionine; ethylene from S-adenosyl-L-methionine: step 2/2.</text>
</comment>
<comment type="similarity">
    <text evidence="4">Belongs to the iron/ascorbate-dependent oxidoreductase family.</text>
</comment>
<comment type="sequence caution" evidence="4">
    <conflict type="erroneous gene model prediction">
        <sequence resource="EMBL-CDS" id="AAG29196"/>
    </conflict>
</comment>
<evidence type="ECO:0000250" key="1"/>
<evidence type="ECO:0000255" key="2"/>
<evidence type="ECO:0000255" key="3">
    <source>
        <dbReference type="PROSITE-ProRule" id="PRU00805"/>
    </source>
</evidence>
<evidence type="ECO:0000305" key="4"/>
<organism>
    <name type="scientific">Arabidopsis thaliana</name>
    <name type="common">Mouse-ear cress</name>
    <dbReference type="NCBI Taxonomy" id="3702"/>
    <lineage>
        <taxon>Eukaryota</taxon>
        <taxon>Viridiplantae</taxon>
        <taxon>Streptophyta</taxon>
        <taxon>Embryophyta</taxon>
        <taxon>Tracheophyta</taxon>
        <taxon>Spermatophyta</taxon>
        <taxon>Magnoliopsida</taxon>
        <taxon>eudicotyledons</taxon>
        <taxon>Gunneridae</taxon>
        <taxon>Pentapetalae</taxon>
        <taxon>rosids</taxon>
        <taxon>malvids</taxon>
        <taxon>Brassicales</taxon>
        <taxon>Brassicaceae</taxon>
        <taxon>Camelineae</taxon>
        <taxon>Arabidopsis</taxon>
    </lineage>
</organism>
<accession>Q0WPW4</accession>
<accession>Q8LCA2</accession>
<accession>Q9FVX5</accession>
<protein>
    <recommendedName>
        <fullName>1-aminocyclopropane-1-carboxylate oxidase 5</fullName>
        <shortName>ACC oxidase 5</shortName>
        <shortName>AtACO5</shortName>
        <ecNumber>1.14.17.4</ecNumber>
    </recommendedName>
</protein>
<feature type="chain" id="PRO_0000408300" description="1-aminocyclopropane-1-carboxylate oxidase 5">
    <location>
        <begin position="1"/>
        <end position="307"/>
    </location>
</feature>
<feature type="domain" description="Fe2OG dioxygenase" evidence="3">
    <location>
        <begin position="152"/>
        <end position="256"/>
    </location>
</feature>
<feature type="coiled-coil region" evidence="2">
    <location>
        <begin position="106"/>
        <end position="134"/>
    </location>
</feature>
<feature type="binding site" evidence="3">
    <location>
        <position position="180"/>
    </location>
    <ligand>
        <name>Fe cation</name>
        <dbReference type="ChEBI" id="CHEBI:24875"/>
    </ligand>
</feature>
<feature type="binding site" evidence="3">
    <location>
        <position position="182"/>
    </location>
    <ligand>
        <name>Fe cation</name>
        <dbReference type="ChEBI" id="CHEBI:24875"/>
    </ligand>
</feature>
<feature type="binding site" evidence="3">
    <location>
        <position position="237"/>
    </location>
    <ligand>
        <name>Fe cation</name>
        <dbReference type="ChEBI" id="CHEBI:24875"/>
    </ligand>
</feature>
<feature type="binding site" evidence="3">
    <location>
        <position position="247"/>
    </location>
    <ligand>
        <name>2-oxoglutarate</name>
        <dbReference type="ChEBI" id="CHEBI:16810"/>
    </ligand>
</feature>
<feature type="sequence conflict" description="In Ref. 5; AAM63764." evidence="4" ref="5">
    <original>N</original>
    <variation>K</variation>
    <location>
        <position position="107"/>
    </location>
</feature>
<feature type="sequence conflict" description="In Ref. 5; AAM63764." evidence="4" ref="5">
    <original>L</original>
    <variation>V</variation>
    <location>
        <position position="240"/>
    </location>
</feature>
<feature type="sequence conflict" description="In Ref. 5; AAM63764." evidence="4" ref="5">
    <original>A</original>
    <variation>T</variation>
    <location>
        <position position="266"/>
    </location>
</feature>
<proteinExistence type="evidence at transcript level"/>
<reference key="1">
    <citation type="journal article" date="2000" name="Nature">
        <title>Sequence and analysis of chromosome 1 of the plant Arabidopsis thaliana.</title>
        <authorList>
            <person name="Theologis A."/>
            <person name="Ecker J.R."/>
            <person name="Palm C.J."/>
            <person name="Federspiel N.A."/>
            <person name="Kaul S."/>
            <person name="White O."/>
            <person name="Alonso J."/>
            <person name="Altafi H."/>
            <person name="Araujo R."/>
            <person name="Bowman C.L."/>
            <person name="Brooks S.Y."/>
            <person name="Buehler E."/>
            <person name="Chan A."/>
            <person name="Chao Q."/>
            <person name="Chen H."/>
            <person name="Cheuk R.F."/>
            <person name="Chin C.W."/>
            <person name="Chung M.K."/>
            <person name="Conn L."/>
            <person name="Conway A.B."/>
            <person name="Conway A.R."/>
            <person name="Creasy T.H."/>
            <person name="Dewar K."/>
            <person name="Dunn P."/>
            <person name="Etgu P."/>
            <person name="Feldblyum T.V."/>
            <person name="Feng J.-D."/>
            <person name="Fong B."/>
            <person name="Fujii C.Y."/>
            <person name="Gill J.E."/>
            <person name="Goldsmith A.D."/>
            <person name="Haas B."/>
            <person name="Hansen N.F."/>
            <person name="Hughes B."/>
            <person name="Huizar L."/>
            <person name="Hunter J.L."/>
            <person name="Jenkins J."/>
            <person name="Johnson-Hopson C."/>
            <person name="Khan S."/>
            <person name="Khaykin E."/>
            <person name="Kim C.J."/>
            <person name="Koo H.L."/>
            <person name="Kremenetskaia I."/>
            <person name="Kurtz D.B."/>
            <person name="Kwan A."/>
            <person name="Lam B."/>
            <person name="Langin-Hooper S."/>
            <person name="Lee A."/>
            <person name="Lee J.M."/>
            <person name="Lenz C.A."/>
            <person name="Li J.H."/>
            <person name="Li Y.-P."/>
            <person name="Lin X."/>
            <person name="Liu S.X."/>
            <person name="Liu Z.A."/>
            <person name="Luros J.S."/>
            <person name="Maiti R."/>
            <person name="Marziali A."/>
            <person name="Militscher J."/>
            <person name="Miranda M."/>
            <person name="Nguyen M."/>
            <person name="Nierman W.C."/>
            <person name="Osborne B.I."/>
            <person name="Pai G."/>
            <person name="Peterson J."/>
            <person name="Pham P.K."/>
            <person name="Rizzo M."/>
            <person name="Rooney T."/>
            <person name="Rowley D."/>
            <person name="Sakano H."/>
            <person name="Salzberg S.L."/>
            <person name="Schwartz J.R."/>
            <person name="Shinn P."/>
            <person name="Southwick A.M."/>
            <person name="Sun H."/>
            <person name="Tallon L.J."/>
            <person name="Tambunga G."/>
            <person name="Toriumi M.J."/>
            <person name="Town C.D."/>
            <person name="Utterback T."/>
            <person name="Van Aken S."/>
            <person name="Vaysberg M."/>
            <person name="Vysotskaia V.S."/>
            <person name="Walker M."/>
            <person name="Wu D."/>
            <person name="Yu G."/>
            <person name="Fraser C.M."/>
            <person name="Venter J.C."/>
            <person name="Davis R.W."/>
        </authorList>
    </citation>
    <scope>NUCLEOTIDE SEQUENCE [LARGE SCALE GENOMIC DNA]</scope>
    <source>
        <strain>cv. Columbia</strain>
    </source>
</reference>
<reference key="2">
    <citation type="journal article" date="2017" name="Plant J.">
        <title>Araport11: a complete reannotation of the Arabidopsis thaliana reference genome.</title>
        <authorList>
            <person name="Cheng C.Y."/>
            <person name="Krishnakumar V."/>
            <person name="Chan A.P."/>
            <person name="Thibaud-Nissen F."/>
            <person name="Schobel S."/>
            <person name="Town C.D."/>
        </authorList>
    </citation>
    <scope>GENOME REANNOTATION</scope>
    <source>
        <strain>cv. Columbia</strain>
    </source>
</reference>
<reference key="3">
    <citation type="submission" date="2006-07" db="EMBL/GenBank/DDBJ databases">
        <title>Large-scale analysis of RIKEN Arabidopsis full-length (RAFL) cDNAs.</title>
        <authorList>
            <person name="Totoki Y."/>
            <person name="Seki M."/>
            <person name="Ishida J."/>
            <person name="Nakajima M."/>
            <person name="Enju A."/>
            <person name="Kamiya A."/>
            <person name="Narusaka M."/>
            <person name="Shin-i T."/>
            <person name="Nakagawa M."/>
            <person name="Sakamoto N."/>
            <person name="Oishi K."/>
            <person name="Kohara Y."/>
            <person name="Kobayashi M."/>
            <person name="Toyoda A."/>
            <person name="Sakaki Y."/>
            <person name="Sakurai T."/>
            <person name="Iida K."/>
            <person name="Akiyama K."/>
            <person name="Satou M."/>
            <person name="Toyoda T."/>
            <person name="Konagaya A."/>
            <person name="Carninci P."/>
            <person name="Kawai J."/>
            <person name="Hayashizaki Y."/>
            <person name="Shinozaki K."/>
        </authorList>
    </citation>
    <scope>NUCLEOTIDE SEQUENCE [LARGE SCALE MRNA]</scope>
    <source>
        <strain>cv. Columbia</strain>
    </source>
</reference>
<reference key="4">
    <citation type="submission" date="2006-08" db="EMBL/GenBank/DDBJ databases">
        <title>Arabidopsis ORF Clones.</title>
        <authorList>
            <person name="Quinitio C."/>
            <person name="Chen H."/>
            <person name="Kim C.J."/>
            <person name="Shinn P."/>
            <person name="Ecker J.R."/>
        </authorList>
    </citation>
    <scope>NUCLEOTIDE SEQUENCE [LARGE SCALE MRNA]</scope>
    <source>
        <strain>cv. Columbia</strain>
    </source>
</reference>
<reference key="5">
    <citation type="submission" date="2002-03" db="EMBL/GenBank/DDBJ databases">
        <title>Full-length cDNA from Arabidopsis thaliana.</title>
        <authorList>
            <person name="Brover V.V."/>
            <person name="Troukhan M.E."/>
            <person name="Alexandrov N.A."/>
            <person name="Lu Y.-P."/>
            <person name="Flavell R.B."/>
            <person name="Feldmann K.A."/>
        </authorList>
    </citation>
    <scope>NUCLEOTIDE SEQUENCE [LARGE SCALE MRNA]</scope>
</reference>
<name>ACCO5_ARATH</name>
<sequence>MAIPVIDFSKLNGEEREKTLSEIARACEEWGFFQLVNHGIPLELLNKVKKLSSDCYKTEREEAFKTSNPVKLLNELVQKNSGEKLENVDWEDVFTLLDHNQNEWPSNIKETMGEYREEVRKLASKMMEVMDENLGLPKGYIKKAFNEGMEDGEETAFFGTKVSHYPPCPHPELVNGLRAHTDAGGVVLLFQDDEYDGLQVLKDGEWIDVQPLPNAIVINTGDQIEVLSNGRYKSAWHRVLAREEGNRRSIASFYNPSYKAAIGPAAVAEEEGSEKKYPKFVFGDYMDVYANQKFMPKEPRFLAVKSL</sequence>
<keyword id="KW-0175">Coiled coil</keyword>
<keyword id="KW-0266">Ethylene biosynthesis</keyword>
<keyword id="KW-0408">Iron</keyword>
<keyword id="KW-0479">Metal-binding</keyword>
<keyword id="KW-0560">Oxidoreductase</keyword>
<keyword id="KW-0611">Plant defense</keyword>
<keyword id="KW-1185">Reference proteome</keyword>
<keyword id="KW-0847">Vitamin C</keyword>